<evidence type="ECO:0000255" key="1">
    <source>
        <dbReference type="HAMAP-Rule" id="MF_00105"/>
    </source>
</evidence>
<reference key="1">
    <citation type="submission" date="2006-03" db="EMBL/GenBank/DDBJ databases">
        <title>Complete sequence of chromosome of Psychrobacter cryohalolentis K5.</title>
        <authorList>
            <consortium name="US DOE Joint Genome Institute"/>
            <person name="Copeland A."/>
            <person name="Lucas S."/>
            <person name="Lapidus A."/>
            <person name="Barry K."/>
            <person name="Detter J.C."/>
            <person name="Glavina T."/>
            <person name="Hammon N."/>
            <person name="Israni S."/>
            <person name="Dalin E."/>
            <person name="Tice H."/>
            <person name="Pitluck S."/>
            <person name="Brettin T."/>
            <person name="Bruce D."/>
            <person name="Han C."/>
            <person name="Tapia R."/>
            <person name="Sims D.R."/>
            <person name="Gilna P."/>
            <person name="Schmutz J."/>
            <person name="Larimer F."/>
            <person name="Land M."/>
            <person name="Hauser L."/>
            <person name="Kyrpides N."/>
            <person name="Kim E."/>
            <person name="Richardson P."/>
        </authorList>
    </citation>
    <scope>NUCLEOTIDE SEQUENCE [LARGE SCALE GENOMIC DNA]</scope>
    <source>
        <strain>ATCC BAA-1226 / DSM 17306 / VKM B-2378 / K5</strain>
    </source>
</reference>
<feature type="chain" id="PRO_1000075883" description="Transcription elongation factor GreA">
    <location>
        <begin position="1"/>
        <end position="158"/>
    </location>
</feature>
<protein>
    <recommendedName>
        <fullName evidence="1">Transcription elongation factor GreA</fullName>
    </recommendedName>
    <alternativeName>
        <fullName evidence="1">Transcript cleavage factor GreA</fullName>
    </alternativeName>
</protein>
<proteinExistence type="inferred from homology"/>
<dbReference type="EMBL" id="CP000323">
    <property type="protein sequence ID" value="ABE74611.1"/>
    <property type="molecule type" value="Genomic_DNA"/>
</dbReference>
<dbReference type="RefSeq" id="WP_011513174.1">
    <property type="nucleotide sequence ID" value="NC_007969.1"/>
</dbReference>
<dbReference type="SMR" id="Q1QCJ2"/>
<dbReference type="STRING" id="335284.Pcryo_0828"/>
<dbReference type="KEGG" id="pcr:Pcryo_0828"/>
<dbReference type="eggNOG" id="COG0782">
    <property type="taxonomic scope" value="Bacteria"/>
</dbReference>
<dbReference type="HOGENOM" id="CLU_101379_2_0_6"/>
<dbReference type="Proteomes" id="UP000002425">
    <property type="component" value="Chromosome"/>
</dbReference>
<dbReference type="GO" id="GO:0003677">
    <property type="term" value="F:DNA binding"/>
    <property type="evidence" value="ECO:0007669"/>
    <property type="project" value="UniProtKB-UniRule"/>
</dbReference>
<dbReference type="GO" id="GO:0070063">
    <property type="term" value="F:RNA polymerase binding"/>
    <property type="evidence" value="ECO:0007669"/>
    <property type="project" value="InterPro"/>
</dbReference>
<dbReference type="GO" id="GO:0006354">
    <property type="term" value="P:DNA-templated transcription elongation"/>
    <property type="evidence" value="ECO:0007669"/>
    <property type="project" value="TreeGrafter"/>
</dbReference>
<dbReference type="GO" id="GO:0032784">
    <property type="term" value="P:regulation of DNA-templated transcription elongation"/>
    <property type="evidence" value="ECO:0007669"/>
    <property type="project" value="UniProtKB-UniRule"/>
</dbReference>
<dbReference type="FunFam" id="1.10.287.180:FF:000001">
    <property type="entry name" value="Transcription elongation factor GreA"/>
    <property type="match status" value="1"/>
</dbReference>
<dbReference type="FunFam" id="3.10.50.30:FF:000001">
    <property type="entry name" value="Transcription elongation factor GreA"/>
    <property type="match status" value="1"/>
</dbReference>
<dbReference type="Gene3D" id="3.10.50.30">
    <property type="entry name" value="Transcription elongation factor, GreA/GreB, C-terminal domain"/>
    <property type="match status" value="1"/>
</dbReference>
<dbReference type="Gene3D" id="1.10.287.180">
    <property type="entry name" value="Transcription elongation factor, GreA/GreB, N-terminal domain"/>
    <property type="match status" value="1"/>
</dbReference>
<dbReference type="HAMAP" id="MF_00105">
    <property type="entry name" value="GreA_GreB"/>
    <property type="match status" value="1"/>
</dbReference>
<dbReference type="InterPro" id="IPR036953">
    <property type="entry name" value="GreA/GreB_C_sf"/>
</dbReference>
<dbReference type="InterPro" id="IPR018151">
    <property type="entry name" value="TF_GreA/GreB_CS"/>
</dbReference>
<dbReference type="InterPro" id="IPR006359">
    <property type="entry name" value="Tscrpt_elong_fac_GreA"/>
</dbReference>
<dbReference type="InterPro" id="IPR028624">
    <property type="entry name" value="Tscrpt_elong_fac_GreA/B"/>
</dbReference>
<dbReference type="InterPro" id="IPR001437">
    <property type="entry name" value="Tscrpt_elong_fac_GreA/B_C"/>
</dbReference>
<dbReference type="InterPro" id="IPR023459">
    <property type="entry name" value="Tscrpt_elong_fac_GreA/B_fam"/>
</dbReference>
<dbReference type="InterPro" id="IPR022691">
    <property type="entry name" value="Tscrpt_elong_fac_GreA/B_N"/>
</dbReference>
<dbReference type="InterPro" id="IPR036805">
    <property type="entry name" value="Tscrpt_elong_fac_GreA/B_N_sf"/>
</dbReference>
<dbReference type="NCBIfam" id="TIGR01462">
    <property type="entry name" value="greA"/>
    <property type="match status" value="1"/>
</dbReference>
<dbReference type="NCBIfam" id="NF001261">
    <property type="entry name" value="PRK00226.1-2"/>
    <property type="match status" value="1"/>
</dbReference>
<dbReference type="NCBIfam" id="NF001263">
    <property type="entry name" value="PRK00226.1-4"/>
    <property type="match status" value="1"/>
</dbReference>
<dbReference type="NCBIfam" id="NF001264">
    <property type="entry name" value="PRK00226.1-5"/>
    <property type="match status" value="1"/>
</dbReference>
<dbReference type="PANTHER" id="PTHR30437">
    <property type="entry name" value="TRANSCRIPTION ELONGATION FACTOR GREA"/>
    <property type="match status" value="1"/>
</dbReference>
<dbReference type="PANTHER" id="PTHR30437:SF4">
    <property type="entry name" value="TRANSCRIPTION ELONGATION FACTOR GREA"/>
    <property type="match status" value="1"/>
</dbReference>
<dbReference type="Pfam" id="PF01272">
    <property type="entry name" value="GreA_GreB"/>
    <property type="match status" value="1"/>
</dbReference>
<dbReference type="Pfam" id="PF03449">
    <property type="entry name" value="GreA_GreB_N"/>
    <property type="match status" value="1"/>
</dbReference>
<dbReference type="PIRSF" id="PIRSF006092">
    <property type="entry name" value="GreA_GreB"/>
    <property type="match status" value="1"/>
</dbReference>
<dbReference type="SUPFAM" id="SSF54534">
    <property type="entry name" value="FKBP-like"/>
    <property type="match status" value="1"/>
</dbReference>
<dbReference type="SUPFAM" id="SSF46557">
    <property type="entry name" value="GreA transcript cleavage protein, N-terminal domain"/>
    <property type="match status" value="1"/>
</dbReference>
<dbReference type="PROSITE" id="PS00829">
    <property type="entry name" value="GREAB_1"/>
    <property type="match status" value="1"/>
</dbReference>
<dbReference type="PROSITE" id="PS00830">
    <property type="entry name" value="GREAB_2"/>
    <property type="match status" value="1"/>
</dbReference>
<gene>
    <name evidence="1" type="primary">greA</name>
    <name type="ordered locus">Pcryo_0828</name>
</gene>
<keyword id="KW-0238">DNA-binding</keyword>
<keyword id="KW-0804">Transcription</keyword>
<keyword id="KW-0805">Transcription regulation</keyword>
<organism>
    <name type="scientific">Psychrobacter cryohalolentis (strain ATCC BAA-1226 / DSM 17306 / VKM B-2378 / K5)</name>
    <dbReference type="NCBI Taxonomy" id="335284"/>
    <lineage>
        <taxon>Bacteria</taxon>
        <taxon>Pseudomonadati</taxon>
        <taxon>Pseudomonadota</taxon>
        <taxon>Gammaproteobacteria</taxon>
        <taxon>Moraxellales</taxon>
        <taxon>Moraxellaceae</taxon>
        <taxon>Psychrobacter</taxon>
    </lineage>
</organism>
<name>GREA_PSYCK</name>
<sequence>MQRYPMTPQGHAALEAELKQLKSIDRPRITASIAEAREHGDLKENAEYHAAREQQGFCEARIRDIEAKLGGAQVIDPTTLPKDGRVIFGVSVVIENMDTEEEKQYKIVGDDEADFKAGKISVNSPIARGLIGKSEGDEARIETPKGVVEYEIMKVIYD</sequence>
<comment type="function">
    <text evidence="1">Necessary for efficient RNA polymerase transcription elongation past template-encoded arresting sites. The arresting sites in DNA have the property of trapping a certain fraction of elongating RNA polymerases that pass through, resulting in locked ternary complexes. Cleavage of the nascent transcript by cleavage factors such as GreA or GreB allows the resumption of elongation from the new 3'terminus. GreA releases sequences of 2 to 3 nucleotides.</text>
</comment>
<comment type="similarity">
    <text evidence="1">Belongs to the GreA/GreB family.</text>
</comment>
<accession>Q1QCJ2</accession>